<keyword id="KW-0007">Acetylation</keyword>
<keyword id="KW-0025">Alternative splicing</keyword>
<keyword id="KW-0131">Cell cycle</keyword>
<keyword id="KW-0132">Cell division</keyword>
<keyword id="KW-0963">Cytoplasm</keyword>
<keyword id="KW-0498">Mitosis</keyword>
<keyword id="KW-0597">Phosphoprotein</keyword>
<keyword id="KW-0650">Protein phosphatase inhibitor</keyword>
<keyword id="KW-1267">Proteomics identification</keyword>
<keyword id="KW-1185">Reference proteome</keyword>
<feature type="initiator methionine" description="Removed" evidence="14 15">
    <location>
        <position position="1"/>
    </location>
</feature>
<feature type="chain" id="PRO_0000146758" description="Alpha-endosulfine">
    <location>
        <begin position="2"/>
        <end position="121"/>
    </location>
</feature>
<feature type="region of interest" description="Disordered" evidence="2">
    <location>
        <begin position="1"/>
        <end position="53"/>
    </location>
</feature>
<feature type="region of interest" description="Disordered" evidence="2">
    <location>
        <begin position="79"/>
        <end position="121"/>
    </location>
</feature>
<feature type="compositionally biased region" description="Basic and acidic residues" evidence="2">
    <location>
        <begin position="16"/>
        <end position="37"/>
    </location>
</feature>
<feature type="modified residue" description="N-acetylserine" evidence="14 15">
    <location>
        <position position="2"/>
    </location>
</feature>
<feature type="modified residue" description="Phosphoserine" evidence="13 14 15 16">
    <location>
        <position position="2"/>
    </location>
</feature>
<feature type="modified residue" description="Phosphothreonine" evidence="16">
    <location>
        <position position="21"/>
    </location>
</feature>
<feature type="modified residue" description="Phosphoserine" evidence="16">
    <location>
        <position position="43"/>
    </location>
</feature>
<feature type="modified residue" description="Phosphoserine; by GWL" evidence="1">
    <location>
        <position position="67"/>
    </location>
</feature>
<feature type="modified residue" description="Phosphoserine; by PKA" evidence="5 14 15">
    <location>
        <position position="109"/>
    </location>
</feature>
<feature type="splice variant" id="VSP_037063" description="In isoform 5, isoform 6 and isoform 7." evidence="7">
    <location>
        <begin position="1"/>
        <end position="4"/>
    </location>
</feature>
<feature type="splice variant" id="VSP_037064" description="In isoform 5, isoform 6 and isoform 7." evidence="7">
    <original>QEEENPAEETGEEKQ</original>
    <variation>MAGGLGCDVCYWFVE</variation>
    <location>
        <begin position="5"/>
        <end position="19"/>
    </location>
</feature>
<feature type="splice variant" id="VSP_037065" description="In isoform 3, isoform 7 and isoform 9." evidence="7">
    <original>G</original>
    <variation>GDYKSLHWSVLLCADEM</variation>
    <location>
        <position position="61"/>
    </location>
</feature>
<feature type="splice variant" id="VSP_037066" description="In isoform 4." evidence="9">
    <original>G</original>
    <variation>GVWGIASYPLSLGLKEVLRMKSVE</variation>
    <location>
        <position position="61"/>
    </location>
</feature>
<feature type="splice variant" id="VSP_037067" description="In isoform 8." evidence="12">
    <original>QKYFDSGDYNMAKAKMKNKQLPSAGPDKNLVTGDHIPTPQDLPQRKSSLVTSKLAGGQVE</original>
    <variation>VWGIVSYPLSLELKEVLRMKSVEVLLDPFLEVLLLNRSRGEFEI</variation>
    <location>
        <begin position="62"/>
        <end position="121"/>
    </location>
</feature>
<feature type="splice variant" id="VSP_001443" description="In isoform 2, isoform 4, isoform 6 and isoform 9." evidence="7 8 9 10 11">
    <location>
        <begin position="118"/>
        <end position="121"/>
    </location>
</feature>
<feature type="mutagenesis site" description="Mimicks a phosphorylated state and impairs interaction with SNCA." evidence="5">
    <original>S</original>
    <variation>E</variation>
    <location>
        <position position="109"/>
    </location>
</feature>
<feature type="sequence conflict" description="In Ref. 8; CAG38815." evidence="12" ref="8">
    <original>Q</original>
    <variation>R</variation>
    <location>
        <position position="5"/>
    </location>
</feature>
<feature type="sequence conflict" description="In Ref. 6; BAF82753." evidence="12" ref="6">
    <original>T</original>
    <variation>M</variation>
    <location>
        <position position="21"/>
    </location>
</feature>
<feature type="sequence conflict" description="In Ref. 11; AAH68544." evidence="12" ref="11">
    <original>Q</original>
    <variation>L</variation>
    <location>
        <position position="22"/>
    </location>
</feature>
<feature type="sequence conflict" description="In Ref. 8; CAG33411." evidence="12" ref="8">
    <original>K</original>
    <variation>Q</variation>
    <location>
        <position position="114"/>
    </location>
</feature>
<proteinExistence type="evidence at protein level"/>
<accession>O43768</accession>
<accession>A8K1Z9</accession>
<accession>E9PB69</accession>
<accession>Q5T5H2</accession>
<accession>Q68D48</accession>
<accession>Q6FHW0</accession>
<accession>Q6IAM4</accession>
<accession>Q6NUL2</accession>
<accession>Q6VUC6</accession>
<accession>Q6VUC7</accession>
<accession>Q6VUC8</accession>
<accession>Q6VUC9</accession>
<accession>Q6VUD0</accession>
<accession>Q6VUD1</accession>
<accession>Q9NRZ0</accession>
<reference key="1">
    <citation type="journal article" date="1998" name="Proc. Natl. Acad. Sci. U.S.A.">
        <title>Human alpha-endosulfine, a possible regulator of sulfonylurea-sensitive K(ATP) channel: molecular cloning, expression and biological properties.</title>
        <authorList>
            <person name="Heron L."/>
            <person name="Virsolvy A."/>
            <person name="Peyrollier K."/>
            <person name="Gribble F.M."/>
            <person name="Le Cam A."/>
            <person name="Ashcroft F.M."/>
            <person name="Bataille D."/>
        </authorList>
    </citation>
    <scope>NUCLEOTIDE SEQUENCE [MRNA] (ISOFORM 1)</scope>
    <scope>FUNCTION</scope>
    <scope>TISSUE SPECIFICITY</scope>
    <scope>PHOSPHORYLATION</scope>
    <source>
        <tissue>Brain</tissue>
    </source>
</reference>
<reference key="2">
    <citation type="journal article" date="1999" name="Diabetes">
        <title>Isolation, characterization, and chromosomal localization of the human ENSA gene that encodes alpha-endosulfine, a regulator of beta-cell K(ATP) channels.</title>
        <authorList>
            <person name="Heron L."/>
            <person name="Virsolvy A."/>
            <person name="Apiou F."/>
            <person name="Le Cam A."/>
            <person name="Bataille D."/>
        </authorList>
    </citation>
    <scope>NUCLEOTIDE SEQUENCE [GENOMIC DNA / MRNA] (ISOFORM 1)</scope>
    <source>
        <tissue>Brain</tissue>
    </source>
</reference>
<reference key="3">
    <citation type="journal article" date="2004" name="Mol. Genet. Metab.">
        <title>The transcribed endosulfine alpha gene is located within a type 2 diabetes-linked region on 1q: sequence and expression analysis in Pima Indians.</title>
        <authorList>
            <person name="Thameem F."/>
            <person name="Farook V.S."/>
            <person name="Yang X."/>
            <person name="Lee Y.-H."/>
            <person name="Permana P.A."/>
            <person name="Bogardus C."/>
            <person name="Prochazka M."/>
        </authorList>
    </citation>
    <scope>NUCLEOTIDE SEQUENCE [GENOMIC DNA]</scope>
    <scope>ALTERNATIVE SPLICING (ISOFORMS 1; 2; 3; 5; 7 AND 8)</scope>
    <scope>TISSUE SPECIFICITY</scope>
</reference>
<reference key="4">
    <citation type="submission" date="1998-05" db="EMBL/GenBank/DDBJ databases">
        <title>Human alpha endosulfine gene.</title>
        <authorList>
            <person name="Zhang Q."/>
            <person name="Fu G."/>
            <person name="Wu J."/>
            <person name="Zhou J."/>
            <person name="Ye M."/>
            <person name="Shen Y."/>
            <person name="Kan L."/>
            <person name="He K."/>
            <person name="Gu B."/>
            <person name="Chen S."/>
            <person name="Mao M."/>
            <person name="Chen Z."/>
        </authorList>
    </citation>
    <scope>NUCLEOTIDE SEQUENCE [MRNA] (ISOFORM 1)</scope>
</reference>
<reference key="5">
    <citation type="submission" date="1999-06" db="EMBL/GenBank/DDBJ databases">
        <title>Cloning and molecular characterization of two isoforms of human endosulfine.</title>
        <authorList>
            <person name="Scott V.E.S."/>
            <person name="Roch J.-M."/>
            <person name="Davis-Taber R.A."/>
            <person name="Molinari E.J."/>
            <person name="Whiteaker K.L."/>
            <person name="Gopalakrishnan M."/>
            <person name="Idler K."/>
            <person name="Sullivan J.P."/>
        </authorList>
    </citation>
    <scope>NUCLEOTIDE SEQUENCE [MRNA] (ISOFORMS 1 AND 2)</scope>
</reference>
<reference key="6">
    <citation type="journal article" date="2004" name="Nat. Genet.">
        <title>Complete sequencing and characterization of 21,243 full-length human cDNAs.</title>
        <authorList>
            <person name="Ota T."/>
            <person name="Suzuki Y."/>
            <person name="Nishikawa T."/>
            <person name="Otsuki T."/>
            <person name="Sugiyama T."/>
            <person name="Irie R."/>
            <person name="Wakamatsu A."/>
            <person name="Hayashi K."/>
            <person name="Sato H."/>
            <person name="Nagai K."/>
            <person name="Kimura K."/>
            <person name="Makita H."/>
            <person name="Sekine M."/>
            <person name="Obayashi M."/>
            <person name="Nishi T."/>
            <person name="Shibahara T."/>
            <person name="Tanaka T."/>
            <person name="Ishii S."/>
            <person name="Yamamoto J."/>
            <person name="Saito K."/>
            <person name="Kawai Y."/>
            <person name="Isono Y."/>
            <person name="Nakamura Y."/>
            <person name="Nagahari K."/>
            <person name="Murakami K."/>
            <person name="Yasuda T."/>
            <person name="Iwayanagi T."/>
            <person name="Wagatsuma M."/>
            <person name="Shiratori A."/>
            <person name="Sudo H."/>
            <person name="Hosoiri T."/>
            <person name="Kaku Y."/>
            <person name="Kodaira H."/>
            <person name="Kondo H."/>
            <person name="Sugawara M."/>
            <person name="Takahashi M."/>
            <person name="Kanda K."/>
            <person name="Yokoi T."/>
            <person name="Furuya T."/>
            <person name="Kikkawa E."/>
            <person name="Omura Y."/>
            <person name="Abe K."/>
            <person name="Kamihara K."/>
            <person name="Katsuta N."/>
            <person name="Sato K."/>
            <person name="Tanikawa M."/>
            <person name="Yamazaki M."/>
            <person name="Ninomiya K."/>
            <person name="Ishibashi T."/>
            <person name="Yamashita H."/>
            <person name="Murakawa K."/>
            <person name="Fujimori K."/>
            <person name="Tanai H."/>
            <person name="Kimata M."/>
            <person name="Watanabe M."/>
            <person name="Hiraoka S."/>
            <person name="Chiba Y."/>
            <person name="Ishida S."/>
            <person name="Ono Y."/>
            <person name="Takiguchi S."/>
            <person name="Watanabe S."/>
            <person name="Yosida M."/>
            <person name="Hotuta T."/>
            <person name="Kusano J."/>
            <person name="Kanehori K."/>
            <person name="Takahashi-Fujii A."/>
            <person name="Hara H."/>
            <person name="Tanase T.-O."/>
            <person name="Nomura Y."/>
            <person name="Togiya S."/>
            <person name="Komai F."/>
            <person name="Hara R."/>
            <person name="Takeuchi K."/>
            <person name="Arita M."/>
            <person name="Imose N."/>
            <person name="Musashino K."/>
            <person name="Yuuki H."/>
            <person name="Oshima A."/>
            <person name="Sasaki N."/>
            <person name="Aotsuka S."/>
            <person name="Yoshikawa Y."/>
            <person name="Matsunawa H."/>
            <person name="Ichihara T."/>
            <person name="Shiohata N."/>
            <person name="Sano S."/>
            <person name="Moriya S."/>
            <person name="Momiyama H."/>
            <person name="Satoh N."/>
            <person name="Takami S."/>
            <person name="Terashima Y."/>
            <person name="Suzuki O."/>
            <person name="Nakagawa S."/>
            <person name="Senoh A."/>
            <person name="Mizoguchi H."/>
            <person name="Goto Y."/>
            <person name="Shimizu F."/>
            <person name="Wakebe H."/>
            <person name="Hishigaki H."/>
            <person name="Watanabe T."/>
            <person name="Sugiyama A."/>
            <person name="Takemoto M."/>
            <person name="Kawakami B."/>
            <person name="Yamazaki M."/>
            <person name="Watanabe K."/>
            <person name="Kumagai A."/>
            <person name="Itakura S."/>
            <person name="Fukuzumi Y."/>
            <person name="Fujimori Y."/>
            <person name="Komiyama M."/>
            <person name="Tashiro H."/>
            <person name="Tanigami A."/>
            <person name="Fujiwara T."/>
            <person name="Ono T."/>
            <person name="Yamada K."/>
            <person name="Fujii Y."/>
            <person name="Ozaki K."/>
            <person name="Hirao M."/>
            <person name="Ohmori Y."/>
            <person name="Kawabata A."/>
            <person name="Hikiji T."/>
            <person name="Kobatake N."/>
            <person name="Inagaki H."/>
            <person name="Ikema Y."/>
            <person name="Okamoto S."/>
            <person name="Okitani R."/>
            <person name="Kawakami T."/>
            <person name="Noguchi S."/>
            <person name="Itoh T."/>
            <person name="Shigeta K."/>
            <person name="Senba T."/>
            <person name="Matsumura K."/>
            <person name="Nakajima Y."/>
            <person name="Mizuno T."/>
            <person name="Morinaga M."/>
            <person name="Sasaki M."/>
            <person name="Togashi T."/>
            <person name="Oyama M."/>
            <person name="Hata H."/>
            <person name="Watanabe M."/>
            <person name="Komatsu T."/>
            <person name="Mizushima-Sugano J."/>
            <person name="Satoh T."/>
            <person name="Shirai Y."/>
            <person name="Takahashi Y."/>
            <person name="Nakagawa K."/>
            <person name="Okumura K."/>
            <person name="Nagase T."/>
            <person name="Nomura N."/>
            <person name="Kikuchi H."/>
            <person name="Masuho Y."/>
            <person name="Yamashita R."/>
            <person name="Nakai K."/>
            <person name="Yada T."/>
            <person name="Nakamura Y."/>
            <person name="Ohara O."/>
            <person name="Isogai T."/>
            <person name="Sugano S."/>
        </authorList>
    </citation>
    <scope>NUCLEOTIDE SEQUENCE [LARGE SCALE MRNA] (ISOFORMS 1; 6 AND 9)</scope>
    <source>
        <tissue>Placenta</tissue>
        <tissue>Pulmonary artery</tissue>
    </source>
</reference>
<reference key="7">
    <citation type="journal article" date="2007" name="BMC Genomics">
        <title>The full-ORF clone resource of the German cDNA consortium.</title>
        <authorList>
            <person name="Bechtel S."/>
            <person name="Rosenfelder H."/>
            <person name="Duda A."/>
            <person name="Schmidt C.P."/>
            <person name="Ernst U."/>
            <person name="Wellenreuther R."/>
            <person name="Mehrle A."/>
            <person name="Schuster C."/>
            <person name="Bahr A."/>
            <person name="Bloecker H."/>
            <person name="Heubner D."/>
            <person name="Hoerlein A."/>
            <person name="Michel G."/>
            <person name="Wedler H."/>
            <person name="Koehrer K."/>
            <person name="Ottenwaelder B."/>
            <person name="Poustka A."/>
            <person name="Wiemann S."/>
            <person name="Schupp I."/>
        </authorList>
    </citation>
    <scope>NUCLEOTIDE SEQUENCE [LARGE SCALE MRNA] (ISOFORM 4)</scope>
    <source>
        <tissue>Liver</tissue>
    </source>
</reference>
<reference key="8">
    <citation type="submission" date="2004-06" db="EMBL/GenBank/DDBJ databases">
        <title>Cloning of human full open reading frames in Gateway(TM) system entry vector (pDONR201).</title>
        <authorList>
            <person name="Halleck A."/>
            <person name="Ebert L."/>
            <person name="Mkoundinya M."/>
            <person name="Schick M."/>
            <person name="Eisenstein S."/>
            <person name="Neubert P."/>
            <person name="Kstrang K."/>
            <person name="Schatten R."/>
            <person name="Shen B."/>
            <person name="Henze S."/>
            <person name="Mar W."/>
            <person name="Korn B."/>
            <person name="Zuo D."/>
            <person name="Hu Y."/>
            <person name="LaBaer J."/>
        </authorList>
    </citation>
    <scope>NUCLEOTIDE SEQUENCE [LARGE SCALE MRNA] (ISOFORMS 1 AND 2)</scope>
</reference>
<reference key="9">
    <citation type="journal article" date="2006" name="Nature">
        <title>The DNA sequence and biological annotation of human chromosome 1.</title>
        <authorList>
            <person name="Gregory S.G."/>
            <person name="Barlow K.F."/>
            <person name="McLay K.E."/>
            <person name="Kaul R."/>
            <person name="Swarbreck D."/>
            <person name="Dunham A."/>
            <person name="Scott C.E."/>
            <person name="Howe K.L."/>
            <person name="Woodfine K."/>
            <person name="Spencer C.C.A."/>
            <person name="Jones M.C."/>
            <person name="Gillson C."/>
            <person name="Searle S."/>
            <person name="Zhou Y."/>
            <person name="Kokocinski F."/>
            <person name="McDonald L."/>
            <person name="Evans R."/>
            <person name="Phillips K."/>
            <person name="Atkinson A."/>
            <person name="Cooper R."/>
            <person name="Jones C."/>
            <person name="Hall R.E."/>
            <person name="Andrews T.D."/>
            <person name="Lloyd C."/>
            <person name="Ainscough R."/>
            <person name="Almeida J.P."/>
            <person name="Ambrose K.D."/>
            <person name="Anderson F."/>
            <person name="Andrew R.W."/>
            <person name="Ashwell R.I.S."/>
            <person name="Aubin K."/>
            <person name="Babbage A.K."/>
            <person name="Bagguley C.L."/>
            <person name="Bailey J."/>
            <person name="Beasley H."/>
            <person name="Bethel G."/>
            <person name="Bird C.P."/>
            <person name="Bray-Allen S."/>
            <person name="Brown J.Y."/>
            <person name="Brown A.J."/>
            <person name="Buckley D."/>
            <person name="Burton J."/>
            <person name="Bye J."/>
            <person name="Carder C."/>
            <person name="Chapman J.C."/>
            <person name="Clark S.Y."/>
            <person name="Clarke G."/>
            <person name="Clee C."/>
            <person name="Cobley V."/>
            <person name="Collier R.E."/>
            <person name="Corby N."/>
            <person name="Coville G.J."/>
            <person name="Davies J."/>
            <person name="Deadman R."/>
            <person name="Dunn M."/>
            <person name="Earthrowl M."/>
            <person name="Ellington A.G."/>
            <person name="Errington H."/>
            <person name="Frankish A."/>
            <person name="Frankland J."/>
            <person name="French L."/>
            <person name="Garner P."/>
            <person name="Garnett J."/>
            <person name="Gay L."/>
            <person name="Ghori M.R.J."/>
            <person name="Gibson R."/>
            <person name="Gilby L.M."/>
            <person name="Gillett W."/>
            <person name="Glithero R.J."/>
            <person name="Grafham D.V."/>
            <person name="Griffiths C."/>
            <person name="Griffiths-Jones S."/>
            <person name="Grocock R."/>
            <person name="Hammond S."/>
            <person name="Harrison E.S.I."/>
            <person name="Hart E."/>
            <person name="Haugen E."/>
            <person name="Heath P.D."/>
            <person name="Holmes S."/>
            <person name="Holt K."/>
            <person name="Howden P.J."/>
            <person name="Hunt A.R."/>
            <person name="Hunt S.E."/>
            <person name="Hunter G."/>
            <person name="Isherwood J."/>
            <person name="James R."/>
            <person name="Johnson C."/>
            <person name="Johnson D."/>
            <person name="Joy A."/>
            <person name="Kay M."/>
            <person name="Kershaw J.K."/>
            <person name="Kibukawa M."/>
            <person name="Kimberley A.M."/>
            <person name="King A."/>
            <person name="Knights A.J."/>
            <person name="Lad H."/>
            <person name="Laird G."/>
            <person name="Lawlor S."/>
            <person name="Leongamornlert D.A."/>
            <person name="Lloyd D.M."/>
            <person name="Loveland J."/>
            <person name="Lovell J."/>
            <person name="Lush M.J."/>
            <person name="Lyne R."/>
            <person name="Martin S."/>
            <person name="Mashreghi-Mohammadi M."/>
            <person name="Matthews L."/>
            <person name="Matthews N.S.W."/>
            <person name="McLaren S."/>
            <person name="Milne S."/>
            <person name="Mistry S."/>
            <person name="Moore M.J.F."/>
            <person name="Nickerson T."/>
            <person name="O'Dell C.N."/>
            <person name="Oliver K."/>
            <person name="Palmeiri A."/>
            <person name="Palmer S.A."/>
            <person name="Parker A."/>
            <person name="Patel D."/>
            <person name="Pearce A.V."/>
            <person name="Peck A.I."/>
            <person name="Pelan S."/>
            <person name="Phelps K."/>
            <person name="Phillimore B.J."/>
            <person name="Plumb R."/>
            <person name="Rajan J."/>
            <person name="Raymond C."/>
            <person name="Rouse G."/>
            <person name="Saenphimmachak C."/>
            <person name="Sehra H.K."/>
            <person name="Sheridan E."/>
            <person name="Shownkeen R."/>
            <person name="Sims S."/>
            <person name="Skuce C.D."/>
            <person name="Smith M."/>
            <person name="Steward C."/>
            <person name="Subramanian S."/>
            <person name="Sycamore N."/>
            <person name="Tracey A."/>
            <person name="Tromans A."/>
            <person name="Van Helmond Z."/>
            <person name="Wall M."/>
            <person name="Wallis J.M."/>
            <person name="White S."/>
            <person name="Whitehead S.L."/>
            <person name="Wilkinson J.E."/>
            <person name="Willey D.L."/>
            <person name="Williams H."/>
            <person name="Wilming L."/>
            <person name="Wray P.W."/>
            <person name="Wu Z."/>
            <person name="Coulson A."/>
            <person name="Vaudin M."/>
            <person name="Sulston J.E."/>
            <person name="Durbin R.M."/>
            <person name="Hubbard T."/>
            <person name="Wooster R."/>
            <person name="Dunham I."/>
            <person name="Carter N.P."/>
            <person name="McVean G."/>
            <person name="Ross M.T."/>
            <person name="Harrow J."/>
            <person name="Olson M.V."/>
            <person name="Beck S."/>
            <person name="Rogers J."/>
            <person name="Bentley D.R."/>
        </authorList>
    </citation>
    <scope>NUCLEOTIDE SEQUENCE [LARGE SCALE GENOMIC DNA]</scope>
</reference>
<reference key="10">
    <citation type="submission" date="2005-09" db="EMBL/GenBank/DDBJ databases">
        <authorList>
            <person name="Mural R.J."/>
            <person name="Istrail S."/>
            <person name="Sutton G.G."/>
            <person name="Florea L."/>
            <person name="Halpern A.L."/>
            <person name="Mobarry C.M."/>
            <person name="Lippert R."/>
            <person name="Walenz B."/>
            <person name="Shatkay H."/>
            <person name="Dew I."/>
            <person name="Miller J.R."/>
            <person name="Flanigan M.J."/>
            <person name="Edwards N.J."/>
            <person name="Bolanos R."/>
            <person name="Fasulo D."/>
            <person name="Halldorsson B.V."/>
            <person name="Hannenhalli S."/>
            <person name="Turner R."/>
            <person name="Yooseph S."/>
            <person name="Lu F."/>
            <person name="Nusskern D.R."/>
            <person name="Shue B.C."/>
            <person name="Zheng X.H."/>
            <person name="Zhong F."/>
            <person name="Delcher A.L."/>
            <person name="Huson D.H."/>
            <person name="Kravitz S.A."/>
            <person name="Mouchard L."/>
            <person name="Reinert K."/>
            <person name="Remington K.A."/>
            <person name="Clark A.G."/>
            <person name="Waterman M.S."/>
            <person name="Eichler E.E."/>
            <person name="Adams M.D."/>
            <person name="Hunkapiller M.W."/>
            <person name="Myers E.W."/>
            <person name="Venter J.C."/>
        </authorList>
    </citation>
    <scope>NUCLEOTIDE SEQUENCE [LARGE SCALE GENOMIC DNA]</scope>
</reference>
<reference key="11">
    <citation type="journal article" date="2004" name="Genome Res.">
        <title>The status, quality, and expansion of the NIH full-length cDNA project: the Mammalian Gene Collection (MGC).</title>
        <authorList>
            <consortium name="The MGC Project Team"/>
        </authorList>
    </citation>
    <scope>NUCLEOTIDE SEQUENCE [LARGE SCALE MRNA] (ISOFORMS 1 AND 2)</scope>
    <source>
        <tissue>B-cell</tissue>
        <tissue>Lung</tissue>
        <tissue>Testis</tissue>
    </source>
</reference>
<reference key="12">
    <citation type="journal article" date="2006" name="Cell">
        <title>Global, in vivo, and site-specific phosphorylation dynamics in signaling networks.</title>
        <authorList>
            <person name="Olsen J.V."/>
            <person name="Blagoev B."/>
            <person name="Gnad F."/>
            <person name="Macek B."/>
            <person name="Kumar C."/>
            <person name="Mortensen P."/>
            <person name="Mann M."/>
        </authorList>
    </citation>
    <scope>PHOSPHORYLATION [LARGE SCALE ANALYSIS] AT SER-2</scope>
    <scope>IDENTIFICATION BY MASS SPECTROMETRY [LARGE SCALE ANALYSIS]</scope>
    <source>
        <tissue>Cervix carcinoma</tissue>
    </source>
</reference>
<reference key="13">
    <citation type="journal article" date="2007" name="J. Biol. Chem.">
        <title>Conformation-specific binding of alpha-synuclein to novel protein partners detected by phage display and NMR spectroscopy.</title>
        <authorList>
            <person name="Woods W.S."/>
            <person name="Boettcher J.M."/>
            <person name="Zhou D.H."/>
            <person name="Kloepper K.D."/>
            <person name="Hartman K.L."/>
            <person name="Ladror D.T."/>
            <person name="Qi Z."/>
            <person name="Rienstra C.M."/>
            <person name="George J.M."/>
        </authorList>
    </citation>
    <scope>INTERACTION WITH SNCA</scope>
</reference>
<reference key="14">
    <citation type="journal article" date="2008" name="Biochemistry">
        <title>Membrane-induced folding of the cAMP-regulated phosphoprotein endosulfine-alpha.</title>
        <authorList>
            <person name="Boettcher J.M."/>
            <person name="Hartman K.L."/>
            <person name="Ladror D.T."/>
            <person name="Qi Z."/>
            <person name="Woods W.S."/>
            <person name="George J.M."/>
            <person name="Rienstra C.M."/>
        </authorList>
    </citation>
    <scope>INTERACTION WITH SNCA</scope>
    <scope>PHOSPHORYLATION AT SER-109</scope>
    <scope>MUTAGENESIS OF SER-109</scope>
</reference>
<reference key="15">
    <citation type="journal article" date="2010" name="Sci. Signal.">
        <title>Quantitative phosphoproteomics reveals widespread full phosphorylation site occupancy during mitosis.</title>
        <authorList>
            <person name="Olsen J.V."/>
            <person name="Vermeulen M."/>
            <person name="Santamaria A."/>
            <person name="Kumar C."/>
            <person name="Miller M.L."/>
            <person name="Jensen L.J."/>
            <person name="Gnad F."/>
            <person name="Cox J."/>
            <person name="Jensen T.S."/>
            <person name="Nigg E.A."/>
            <person name="Brunak S."/>
            <person name="Mann M."/>
        </authorList>
    </citation>
    <scope>ACETYLATION [LARGE SCALE ANALYSIS] AT SER-2</scope>
    <scope>PHOSPHORYLATION [LARGE SCALE ANALYSIS] AT SER-2 AND SER-109</scope>
    <scope>CLEAVAGE OF INITIATOR METHIONINE [LARGE SCALE ANALYSIS]</scope>
    <scope>IDENTIFICATION BY MASS SPECTROMETRY [LARGE SCALE ANALYSIS]</scope>
    <source>
        <tissue>Cervix carcinoma</tissue>
    </source>
</reference>
<reference key="16">
    <citation type="journal article" date="2011" name="BMC Syst. Biol.">
        <title>Initial characterization of the human central proteome.</title>
        <authorList>
            <person name="Burkard T.R."/>
            <person name="Planyavsky M."/>
            <person name="Kaupe I."/>
            <person name="Breitwieser F.P."/>
            <person name="Buerckstuemmer T."/>
            <person name="Bennett K.L."/>
            <person name="Superti-Furga G."/>
            <person name="Colinge J."/>
        </authorList>
    </citation>
    <scope>IDENTIFICATION BY MASS SPECTROMETRY [LARGE SCALE ANALYSIS]</scope>
</reference>
<reference key="17">
    <citation type="journal article" date="2011" name="Sci. Signal.">
        <title>System-wide temporal characterization of the proteome and phosphoproteome of human embryonic stem cell differentiation.</title>
        <authorList>
            <person name="Rigbolt K.T."/>
            <person name="Prokhorova T.A."/>
            <person name="Akimov V."/>
            <person name="Henningsen J."/>
            <person name="Johansen P.T."/>
            <person name="Kratchmarova I."/>
            <person name="Kassem M."/>
            <person name="Mann M."/>
            <person name="Olsen J.V."/>
            <person name="Blagoev B."/>
        </authorList>
    </citation>
    <scope>ACETYLATION [LARGE SCALE ANALYSIS] AT SER-2</scope>
    <scope>PHOSPHORYLATION [LARGE SCALE ANALYSIS] AT SER-2 AND SER-109</scope>
    <scope>CLEAVAGE OF INITIATOR METHIONINE [LARGE SCALE ANALYSIS]</scope>
    <scope>IDENTIFICATION BY MASS SPECTROMETRY [LARGE SCALE ANALYSIS]</scope>
</reference>
<reference key="18">
    <citation type="journal article" date="2013" name="J. Proteome Res.">
        <title>Toward a comprehensive characterization of a human cancer cell phosphoproteome.</title>
        <authorList>
            <person name="Zhou H."/>
            <person name="Di Palma S."/>
            <person name="Preisinger C."/>
            <person name="Peng M."/>
            <person name="Polat A.N."/>
            <person name="Heck A.J."/>
            <person name="Mohammed S."/>
        </authorList>
    </citation>
    <scope>PHOSPHORYLATION [LARGE SCALE ANALYSIS] AT SER-2; THR-21 AND SER-43</scope>
    <scope>IDENTIFICATION BY MASS SPECTROMETRY [LARGE SCALE ANALYSIS]</scope>
    <source>
        <tissue>Cervix carcinoma</tissue>
        <tissue>Erythroleukemia</tissue>
    </source>
</reference>
<reference key="19">
    <citation type="journal article" date="2014" name="J. Proteomics">
        <title>An enzyme assisted RP-RPLC approach for in-depth analysis of human liver phosphoproteome.</title>
        <authorList>
            <person name="Bian Y."/>
            <person name="Song C."/>
            <person name="Cheng K."/>
            <person name="Dong M."/>
            <person name="Wang F."/>
            <person name="Huang J."/>
            <person name="Sun D."/>
            <person name="Wang L."/>
            <person name="Ye M."/>
            <person name="Zou H."/>
        </authorList>
    </citation>
    <scope>IDENTIFICATION BY MASS SPECTROMETRY [LARGE SCALE ANALYSIS]</scope>
    <source>
        <tissue>Liver</tissue>
    </source>
</reference>
<organism>
    <name type="scientific">Homo sapiens</name>
    <name type="common">Human</name>
    <dbReference type="NCBI Taxonomy" id="9606"/>
    <lineage>
        <taxon>Eukaryota</taxon>
        <taxon>Metazoa</taxon>
        <taxon>Chordata</taxon>
        <taxon>Craniata</taxon>
        <taxon>Vertebrata</taxon>
        <taxon>Euteleostomi</taxon>
        <taxon>Mammalia</taxon>
        <taxon>Eutheria</taxon>
        <taxon>Euarchontoglires</taxon>
        <taxon>Primates</taxon>
        <taxon>Haplorrhini</taxon>
        <taxon>Catarrhini</taxon>
        <taxon>Hominidae</taxon>
        <taxon>Homo</taxon>
    </lineage>
</organism>
<sequence length="121" mass="13389">MSQKQEEENPAEETGEEKQDTQEKEGILPERAEEAKLKAKYPSLGQKPGGSDFLMKRLQKGQKYFDSGDYNMAKAKMKNKQLPSAGPDKNLVTGDHIPTPQDLPQRKSSLVTSKLAGGQVE</sequence>
<protein>
    <recommendedName>
        <fullName>Alpha-endosulfine</fullName>
    </recommendedName>
    <alternativeName>
        <fullName>ARPP-19e</fullName>
    </alternativeName>
</protein>
<name>ENSA_HUMAN</name>
<evidence type="ECO:0000250" key="1"/>
<evidence type="ECO:0000256" key="2">
    <source>
        <dbReference type="SAM" id="MobiDB-lite"/>
    </source>
</evidence>
<evidence type="ECO:0000269" key="3">
    <source>
    </source>
</evidence>
<evidence type="ECO:0000269" key="4">
    <source>
    </source>
</evidence>
<evidence type="ECO:0000269" key="5">
    <source>
    </source>
</evidence>
<evidence type="ECO:0000269" key="6">
    <source>
    </source>
</evidence>
<evidence type="ECO:0000303" key="7">
    <source>
    </source>
</evidence>
<evidence type="ECO:0000303" key="8">
    <source>
    </source>
</evidence>
<evidence type="ECO:0000303" key="9">
    <source>
    </source>
</evidence>
<evidence type="ECO:0000303" key="10">
    <source ref="5"/>
</evidence>
<evidence type="ECO:0000303" key="11">
    <source ref="8"/>
</evidence>
<evidence type="ECO:0000305" key="12"/>
<evidence type="ECO:0007744" key="13">
    <source>
    </source>
</evidence>
<evidence type="ECO:0007744" key="14">
    <source>
    </source>
</evidence>
<evidence type="ECO:0007744" key="15">
    <source>
    </source>
</evidence>
<evidence type="ECO:0007744" key="16">
    <source>
    </source>
</evidence>
<gene>
    <name type="primary">ENSA</name>
</gene>
<comment type="function">
    <text evidence="1 6">Protein phosphatase inhibitor that specifically inhibits protein phosphatase 2A (PP2A) during mitosis. When phosphorylated at Ser-67 during mitosis, specifically interacts with PPP2R2D (PR55-delta) and inhibits its activity, leading to inactivation of PP2A, an essential condition to keep cyclin-B1-CDK1 activity high during M phase (By similarity). Also acts as a stimulator of insulin secretion by interacting with sulfonylurea receptor (ABCC8), thereby preventing sulfonylurea from binding to its receptor and reducing K(ATP) channel currents.</text>
</comment>
<comment type="subunit">
    <text evidence="1 4 5">Interacts (when phosphorylated at Ser-67) with PPP2R2D (By similarity). Interacts with ABCC8. Interacts with SNCA; interaction is disrupted when phosphorylated at Ser-109.</text>
</comment>
<comment type="interaction">
    <interactant intactId="EBI-714511">
        <id>O43768</id>
    </interactant>
    <interactant intactId="EBI-717666">
        <id>Q96AP0</id>
        <label>ACD</label>
    </interactant>
    <organismsDiffer>false</organismsDiffer>
    <experiments>2</experiments>
</comment>
<comment type="interaction">
    <interactant intactId="EBI-25853109">
        <id>O43768-8</id>
    </interactant>
    <interactant intactId="EBI-348399">
        <id>P22607</id>
        <label>FGFR3</label>
    </interactant>
    <organismsDiffer>false</organismsDiffer>
    <experiments>3</experiments>
</comment>
<comment type="interaction">
    <interactant intactId="EBI-25853109">
        <id>O43768-8</id>
    </interactant>
    <interactant intactId="EBI-741480">
        <id>Q9UMX0</id>
        <label>UBQLN1</label>
    </interactant>
    <organismsDiffer>false</organismsDiffer>
    <experiments>3</experiments>
</comment>
<comment type="interaction">
    <interactant intactId="EBI-25853109">
        <id>O43768-8</id>
    </interactant>
    <interactant intactId="EBI-25900580">
        <id>Q9Y649</id>
    </interactant>
    <organismsDiffer>false</organismsDiffer>
    <experiments>3</experiments>
</comment>
<comment type="subcellular location">
    <subcellularLocation>
        <location evidence="1">Cytoplasm</location>
    </subcellularLocation>
</comment>
<comment type="alternative products">
    <event type="alternative splicing"/>
    <isoform>
        <id>O43768-1</id>
        <name>1</name>
        <name>Alpha</name>
        <sequence type="displayed"/>
    </isoform>
    <isoform>
        <id>O43768-2</id>
        <name>2</name>
        <name>Beta</name>
        <sequence type="described" ref="VSP_001443"/>
    </isoform>
    <isoform>
        <id>O43768-3</id>
        <name>3</name>
        <sequence type="described" ref="VSP_037065"/>
    </isoform>
    <isoform>
        <id>O43768-4</id>
        <name>4</name>
        <sequence type="described" ref="VSP_037066 VSP_001443"/>
    </isoform>
    <isoform>
        <id>O43768-5</id>
        <name>5</name>
        <sequence type="described" ref="VSP_037063 VSP_037064"/>
    </isoform>
    <isoform>
        <id>O43768-6</id>
        <name>6</name>
        <sequence type="described" ref="VSP_037063 VSP_037064 VSP_001443"/>
    </isoform>
    <isoform>
        <id>O43768-7</id>
        <name>7</name>
        <sequence type="described" ref="VSP_037063 VSP_037064 VSP_037065"/>
    </isoform>
    <isoform>
        <id>O43768-8</id>
        <name>8</name>
        <sequence type="described" ref="VSP_037067"/>
    </isoform>
    <isoform>
        <id>O43768-9</id>
        <name>9</name>
        <sequence type="described" ref="VSP_037065 VSP_001443"/>
    </isoform>
</comment>
<comment type="tissue specificity">
    <text evidence="3 6">Widely expressed with high levels in skeletal muscle and brain and lower levels in the pancreas.</text>
</comment>
<comment type="PTM">
    <text evidence="1 5 6">Phosphorylation at Ser-67 by GWL during mitosis is essential for interaction with PPP2R2D (PR55-delta) and subsequent inactivation of PP2A (By similarity). Phosphorylated by PKA.</text>
</comment>
<comment type="similarity">
    <text evidence="12">Belongs to the endosulfine family.</text>
</comment>
<dbReference type="EMBL" id="X99906">
    <property type="protein sequence ID" value="CAA68180.1"/>
    <property type="molecule type" value="mRNA"/>
</dbReference>
<dbReference type="EMBL" id="AJ010966">
    <property type="protein sequence ID" value="CAB65125.1"/>
    <property type="molecule type" value="Genomic_DNA"/>
</dbReference>
<dbReference type="EMBL" id="AY326403">
    <property type="protein sequence ID" value="AAQ73827.1"/>
    <property type="molecule type" value="Genomic_DNA"/>
</dbReference>
<dbReference type="EMBL" id="AY326400">
    <property type="protein sequence ID" value="AAQ73827.1"/>
    <property type="status" value="JOINED"/>
    <property type="molecule type" value="Genomic_DNA"/>
</dbReference>
<dbReference type="EMBL" id="AY326401">
    <property type="protein sequence ID" value="AAQ73827.1"/>
    <property type="status" value="JOINED"/>
    <property type="molecule type" value="Genomic_DNA"/>
</dbReference>
<dbReference type="EMBL" id="AY326402">
    <property type="protein sequence ID" value="AAQ73827.1"/>
    <property type="status" value="JOINED"/>
    <property type="molecule type" value="Genomic_DNA"/>
</dbReference>
<dbReference type="EMBL" id="AY326403">
    <property type="protein sequence ID" value="AAQ73828.1"/>
    <property type="molecule type" value="Genomic_DNA"/>
</dbReference>
<dbReference type="EMBL" id="AY326400">
    <property type="protein sequence ID" value="AAQ73828.1"/>
    <property type="status" value="JOINED"/>
    <property type="molecule type" value="Genomic_DNA"/>
</dbReference>
<dbReference type="EMBL" id="AY326401">
    <property type="protein sequence ID" value="AAQ73828.1"/>
    <property type="status" value="JOINED"/>
    <property type="molecule type" value="Genomic_DNA"/>
</dbReference>
<dbReference type="EMBL" id="AY326402">
    <property type="protein sequence ID" value="AAQ73828.1"/>
    <property type="status" value="JOINED"/>
    <property type="molecule type" value="Genomic_DNA"/>
</dbReference>
<dbReference type="EMBL" id="AY326402">
    <property type="protein sequence ID" value="AAQ73829.1"/>
    <property type="molecule type" value="Genomic_DNA"/>
</dbReference>
<dbReference type="EMBL" id="AY326400">
    <property type="protein sequence ID" value="AAQ73829.1"/>
    <property type="status" value="JOINED"/>
    <property type="molecule type" value="Genomic_DNA"/>
</dbReference>
<dbReference type="EMBL" id="AY326401">
    <property type="protein sequence ID" value="AAQ73829.1"/>
    <property type="status" value="JOINED"/>
    <property type="molecule type" value="Genomic_DNA"/>
</dbReference>
<dbReference type="EMBL" id="AY326401">
    <property type="protein sequence ID" value="AAQ73830.1"/>
    <property type="molecule type" value="Genomic_DNA"/>
</dbReference>
<dbReference type="EMBL" id="AY326400">
    <property type="protein sequence ID" value="AAQ73830.1"/>
    <property type="status" value="JOINED"/>
    <property type="molecule type" value="Genomic_DNA"/>
</dbReference>
<dbReference type="EMBL" id="AY326403">
    <property type="protein sequence ID" value="AAQ73831.1"/>
    <property type="molecule type" value="Genomic_DNA"/>
</dbReference>
<dbReference type="EMBL" id="AY326400">
    <property type="protein sequence ID" value="AAQ73831.1"/>
    <property type="status" value="JOINED"/>
    <property type="molecule type" value="Genomic_DNA"/>
</dbReference>
<dbReference type="EMBL" id="AY326401">
    <property type="protein sequence ID" value="AAQ73831.1"/>
    <property type="status" value="JOINED"/>
    <property type="molecule type" value="Genomic_DNA"/>
</dbReference>
<dbReference type="EMBL" id="AY326402">
    <property type="protein sequence ID" value="AAQ73831.1"/>
    <property type="status" value="JOINED"/>
    <property type="molecule type" value="Genomic_DNA"/>
</dbReference>
<dbReference type="EMBL" id="AY326403">
    <property type="protein sequence ID" value="AAQ73832.1"/>
    <property type="molecule type" value="Genomic_DNA"/>
</dbReference>
<dbReference type="EMBL" id="AY326400">
    <property type="protein sequence ID" value="AAQ73832.1"/>
    <property type="status" value="JOINED"/>
    <property type="molecule type" value="Genomic_DNA"/>
</dbReference>
<dbReference type="EMBL" id="AY326401">
    <property type="protein sequence ID" value="AAQ73832.1"/>
    <property type="status" value="JOINED"/>
    <property type="molecule type" value="Genomic_DNA"/>
</dbReference>
<dbReference type="EMBL" id="AY326402">
    <property type="protein sequence ID" value="AAQ73832.1"/>
    <property type="status" value="JOINED"/>
    <property type="molecule type" value="Genomic_DNA"/>
</dbReference>
<dbReference type="EMBL" id="AF067170">
    <property type="protein sequence ID" value="AAD32454.1"/>
    <property type="molecule type" value="mRNA"/>
</dbReference>
<dbReference type="EMBL" id="AF157509">
    <property type="protein sequence ID" value="AAF80340.1"/>
    <property type="molecule type" value="mRNA"/>
</dbReference>
<dbReference type="EMBL" id="AF157510">
    <property type="protein sequence ID" value="AAF80341.1"/>
    <property type="molecule type" value="mRNA"/>
</dbReference>
<dbReference type="EMBL" id="AK001981">
    <property type="protein sequence ID" value="BAG50998.1"/>
    <property type="molecule type" value="mRNA"/>
</dbReference>
<dbReference type="EMBL" id="AK290064">
    <property type="protein sequence ID" value="BAF82753.1"/>
    <property type="molecule type" value="mRNA"/>
</dbReference>
<dbReference type="EMBL" id="DA888224">
    <property type="status" value="NOT_ANNOTATED_CDS"/>
    <property type="molecule type" value="mRNA"/>
</dbReference>
<dbReference type="EMBL" id="CR749580">
    <property type="protein sequence ID" value="CAH18372.1"/>
    <property type="molecule type" value="mRNA"/>
</dbReference>
<dbReference type="EMBL" id="CR457130">
    <property type="protein sequence ID" value="CAG33411.1"/>
    <property type="molecule type" value="mRNA"/>
</dbReference>
<dbReference type="EMBL" id="CR536578">
    <property type="protein sequence ID" value="CAG38815.1"/>
    <property type="molecule type" value="mRNA"/>
</dbReference>
<dbReference type="EMBL" id="AL356356">
    <property type="status" value="NOT_ANNOTATED_CDS"/>
    <property type="molecule type" value="Genomic_DNA"/>
</dbReference>
<dbReference type="EMBL" id="CH471121">
    <property type="protein sequence ID" value="EAW53528.1"/>
    <property type="molecule type" value="Genomic_DNA"/>
</dbReference>
<dbReference type="EMBL" id="CH471121">
    <property type="protein sequence ID" value="EAW53529.1"/>
    <property type="molecule type" value="Genomic_DNA"/>
</dbReference>
<dbReference type="EMBL" id="CH471121">
    <property type="protein sequence ID" value="EAW53530.1"/>
    <property type="molecule type" value="Genomic_DNA"/>
</dbReference>
<dbReference type="EMBL" id="CH471121">
    <property type="protein sequence ID" value="EAW53532.1"/>
    <property type="molecule type" value="Genomic_DNA"/>
</dbReference>
<dbReference type="EMBL" id="CH471121">
    <property type="protein sequence ID" value="EAW53533.1"/>
    <property type="molecule type" value="Genomic_DNA"/>
</dbReference>
<dbReference type="EMBL" id="BC000436">
    <property type="protein sequence ID" value="AAH00436.1"/>
    <property type="molecule type" value="mRNA"/>
</dbReference>
<dbReference type="EMBL" id="BC004461">
    <property type="protein sequence ID" value="AAH04461.1"/>
    <property type="molecule type" value="mRNA"/>
</dbReference>
<dbReference type="EMBL" id="BC068544">
    <property type="protein sequence ID" value="AAH68544.1"/>
    <property type="molecule type" value="mRNA"/>
</dbReference>
<dbReference type="EMBL" id="BC069208">
    <property type="protein sequence ID" value="AAH69208.1"/>
    <property type="molecule type" value="mRNA"/>
</dbReference>
<dbReference type="CCDS" id="CCDS958.1">
    <molecule id="O43768-1"/>
</dbReference>
<dbReference type="CCDS" id="CCDS959.1">
    <molecule id="O43768-3"/>
</dbReference>
<dbReference type="CCDS" id="CCDS960.1">
    <molecule id="O43768-7"/>
</dbReference>
<dbReference type="CCDS" id="CCDS961.1">
    <molecule id="O43768-5"/>
</dbReference>
<dbReference type="CCDS" id="CCDS962.1">
    <molecule id="O43768-9"/>
</dbReference>
<dbReference type="CCDS" id="CCDS963.1">
    <molecule id="O43768-2"/>
</dbReference>
<dbReference type="CCDS" id="CCDS964.1">
    <molecule id="O43768-6"/>
</dbReference>
<dbReference type="CCDS" id="CCDS965.1">
    <molecule id="O43768-8"/>
</dbReference>
<dbReference type="RefSeq" id="NP_004427.1">
    <molecule id="O43768-1"/>
    <property type="nucleotide sequence ID" value="NM_004436.4"/>
</dbReference>
<dbReference type="RefSeq" id="NP_996925.1">
    <molecule id="O43768-3"/>
    <property type="nucleotide sequence ID" value="NM_207042.2"/>
</dbReference>
<dbReference type="RefSeq" id="NP_996926.1">
    <molecule id="O43768-9"/>
    <property type="nucleotide sequence ID" value="NM_207043.2"/>
</dbReference>
<dbReference type="RefSeq" id="NP_996927.1">
    <molecule id="O43768-2"/>
    <property type="nucleotide sequence ID" value="NM_207044.2"/>
</dbReference>
<dbReference type="RefSeq" id="NP_996928.1">
    <molecule id="O43768-7"/>
    <property type="nucleotide sequence ID" value="NM_207045.2"/>
</dbReference>
<dbReference type="RefSeq" id="NP_996929.1">
    <molecule id="O43768-5"/>
    <property type="nucleotide sequence ID" value="NM_207046.2"/>
</dbReference>
<dbReference type="RefSeq" id="NP_996930.1">
    <molecule id="O43768-6"/>
    <property type="nucleotide sequence ID" value="NM_207047.2"/>
</dbReference>
<dbReference type="RefSeq" id="NP_997051.1">
    <molecule id="O43768-8"/>
    <property type="nucleotide sequence ID" value="NM_207168.2"/>
</dbReference>
<dbReference type="BMRB" id="O43768"/>
<dbReference type="SMR" id="O43768"/>
<dbReference type="BioGRID" id="108343">
    <property type="interactions" value="73"/>
</dbReference>
<dbReference type="FunCoup" id="O43768">
    <property type="interactions" value="3055"/>
</dbReference>
<dbReference type="IntAct" id="O43768">
    <property type="interactions" value="50"/>
</dbReference>
<dbReference type="MINT" id="O43768"/>
<dbReference type="STRING" id="9606.ENSP00000341743"/>
<dbReference type="GlyGen" id="O43768">
    <property type="glycosylation" value="3 sites, 2 O-linked glycans (3 sites)"/>
</dbReference>
<dbReference type="iPTMnet" id="O43768"/>
<dbReference type="MetOSite" id="O43768"/>
<dbReference type="PhosphoSitePlus" id="O43768"/>
<dbReference type="BioMuta" id="ENSA"/>
<dbReference type="jPOST" id="O43768"/>
<dbReference type="MassIVE" id="O43768"/>
<dbReference type="PeptideAtlas" id="O43768"/>
<dbReference type="ProteomicsDB" id="19158"/>
<dbReference type="ProteomicsDB" id="49158">
    <molecule id="O43768-1"/>
</dbReference>
<dbReference type="ProteomicsDB" id="49159">
    <molecule id="O43768-2"/>
</dbReference>
<dbReference type="ProteomicsDB" id="49160">
    <molecule id="O43768-3"/>
</dbReference>
<dbReference type="ProteomicsDB" id="49161">
    <molecule id="O43768-4"/>
</dbReference>
<dbReference type="ProteomicsDB" id="49162">
    <molecule id="O43768-5"/>
</dbReference>
<dbReference type="ProteomicsDB" id="49163">
    <molecule id="O43768-6"/>
</dbReference>
<dbReference type="ProteomicsDB" id="49164">
    <molecule id="O43768-7"/>
</dbReference>
<dbReference type="ProteomicsDB" id="49165">
    <molecule id="O43768-8"/>
</dbReference>
<dbReference type="Pumba" id="O43768"/>
<dbReference type="TopDownProteomics" id="O43768-1">
    <molecule id="O43768-1"/>
</dbReference>
<dbReference type="TopDownProteomics" id="O43768-2">
    <molecule id="O43768-2"/>
</dbReference>
<dbReference type="TopDownProteomics" id="O43768-3">
    <molecule id="O43768-3"/>
</dbReference>
<dbReference type="TopDownProteomics" id="O43768-5">
    <molecule id="O43768-5"/>
</dbReference>
<dbReference type="Antibodypedia" id="34035">
    <property type="antibodies" value="238 antibodies from 28 providers"/>
</dbReference>
<dbReference type="DNASU" id="2029"/>
<dbReference type="Ensembl" id="ENST00000271690.12">
    <molecule id="O43768-2"/>
    <property type="protein sequence ID" value="ENSP00000271690.7"/>
    <property type="gene ID" value="ENSG00000143420.19"/>
</dbReference>
<dbReference type="Ensembl" id="ENST00000339643.9">
    <molecule id="O43768-3"/>
    <property type="protein sequence ID" value="ENSP00000341743.5"/>
    <property type="gene ID" value="ENSG00000143420.19"/>
</dbReference>
<dbReference type="Ensembl" id="ENST00000361532.9">
    <molecule id="O43768-5"/>
    <property type="protein sequence ID" value="ENSP00000354835.5"/>
    <property type="gene ID" value="ENSG00000143420.19"/>
</dbReference>
<dbReference type="Ensembl" id="ENST00000361631.9">
    <molecule id="O43768-7"/>
    <property type="protein sequence ID" value="ENSP00000355239.5"/>
    <property type="gene ID" value="ENSG00000143420.19"/>
</dbReference>
<dbReference type="Ensembl" id="ENST00000362052.7">
    <molecule id="O43768-8"/>
    <property type="protein sequence ID" value="ENSP00000355220.7"/>
    <property type="gene ID" value="ENSG00000143420.19"/>
</dbReference>
<dbReference type="Ensembl" id="ENST00000369014.10">
    <molecule id="O43768-1"/>
    <property type="protein sequence ID" value="ENSP00000358010.6"/>
    <property type="gene ID" value="ENSG00000143420.19"/>
</dbReference>
<dbReference type="Ensembl" id="ENST00000503241.1">
    <molecule id="O43768-9"/>
    <property type="protein sequence ID" value="ENSP00000424242.1"/>
    <property type="gene ID" value="ENSG00000143420.19"/>
</dbReference>
<dbReference type="Ensembl" id="ENST00000503345.1">
    <molecule id="O43768-8"/>
    <property type="protein sequence ID" value="ENSP00000421458.1"/>
    <property type="gene ID" value="ENSG00000143420.19"/>
</dbReference>
<dbReference type="Ensembl" id="ENST00000509582.5">
    <molecule id="O43768-8"/>
    <property type="protein sequence ID" value="ENSP00000426110.1"/>
    <property type="gene ID" value="ENSG00000143420.19"/>
</dbReference>
<dbReference type="Ensembl" id="ENST00000513281.5">
    <molecule id="O43768-6"/>
    <property type="protein sequence ID" value="ENSP00000422343.1"/>
    <property type="gene ID" value="ENSG00000143420.19"/>
</dbReference>
<dbReference type="GeneID" id="2029"/>
<dbReference type="KEGG" id="hsa:2029"/>
<dbReference type="MANE-Select" id="ENST00000369014.10">
    <property type="protein sequence ID" value="ENSP00000358010.6"/>
    <property type="RefSeq nucleotide sequence ID" value="NM_004436.4"/>
    <property type="RefSeq protein sequence ID" value="NP_004427.1"/>
</dbReference>
<dbReference type="UCSC" id="uc001evb.4">
    <molecule id="O43768-1"/>
    <property type="organism name" value="human"/>
</dbReference>
<dbReference type="AGR" id="HGNC:3360"/>
<dbReference type="CTD" id="2029"/>
<dbReference type="DisGeNET" id="2029"/>
<dbReference type="GeneCards" id="ENSA"/>
<dbReference type="HGNC" id="HGNC:3360">
    <property type="gene designation" value="ENSA"/>
</dbReference>
<dbReference type="HPA" id="ENSG00000143420">
    <property type="expression patterns" value="Low tissue specificity"/>
</dbReference>
<dbReference type="MIM" id="603061">
    <property type="type" value="gene"/>
</dbReference>
<dbReference type="neXtProt" id="NX_O43768"/>
<dbReference type="OpenTargets" id="ENSG00000143420"/>
<dbReference type="PharmGKB" id="PA27796"/>
<dbReference type="VEuPathDB" id="HostDB:ENSG00000143420"/>
<dbReference type="GeneTree" id="ENSGT00940000155413"/>
<dbReference type="HOGENOM" id="CLU_125025_1_0_1"/>
<dbReference type="InParanoid" id="O43768"/>
<dbReference type="OrthoDB" id="5949865at2759"/>
<dbReference type="PAN-GO" id="O43768">
    <property type="GO annotations" value="3 GO annotations based on evolutionary models"/>
</dbReference>
<dbReference type="PhylomeDB" id="O43768"/>
<dbReference type="TreeFam" id="TF314718"/>
<dbReference type="PathwayCommons" id="O43768"/>
<dbReference type="Reactome" id="R-HSA-2465910">
    <property type="pathway name" value="MASTL Facilitates Mitotic Progression"/>
</dbReference>
<dbReference type="SignaLink" id="O43768"/>
<dbReference type="SIGNOR" id="O43768"/>
<dbReference type="BioGRID-ORCS" id="2029">
    <property type="hits" value="86 hits in 1119 CRISPR screens"/>
</dbReference>
<dbReference type="ChiTaRS" id="ENSA">
    <property type="organism name" value="human"/>
</dbReference>
<dbReference type="GeneWiki" id="ENSA_(gene)"/>
<dbReference type="GenomeRNAi" id="2029"/>
<dbReference type="Pharos" id="O43768">
    <property type="development level" value="Tbio"/>
</dbReference>
<dbReference type="PRO" id="PR:O43768"/>
<dbReference type="Proteomes" id="UP000005640">
    <property type="component" value="Chromosome 1"/>
</dbReference>
<dbReference type="RNAct" id="O43768">
    <property type="molecule type" value="protein"/>
</dbReference>
<dbReference type="Bgee" id="ENSG00000143420">
    <property type="expression patterns" value="Expressed in cervix squamous epithelium and 206 other cell types or tissues"/>
</dbReference>
<dbReference type="ExpressionAtlas" id="O43768">
    <property type="expression patterns" value="baseline and differential"/>
</dbReference>
<dbReference type="GO" id="GO:0005737">
    <property type="term" value="C:cytoplasm"/>
    <property type="evidence" value="ECO:0000318"/>
    <property type="project" value="GO_Central"/>
</dbReference>
<dbReference type="GO" id="GO:0005654">
    <property type="term" value="C:nucleoplasm"/>
    <property type="evidence" value="ECO:0000304"/>
    <property type="project" value="Reactome"/>
</dbReference>
<dbReference type="GO" id="GO:0008200">
    <property type="term" value="F:ion channel inhibitor activity"/>
    <property type="evidence" value="ECO:0000304"/>
    <property type="project" value="ProtInc"/>
</dbReference>
<dbReference type="GO" id="GO:0019212">
    <property type="term" value="F:phosphatase inhibitor activity"/>
    <property type="evidence" value="ECO:0000250"/>
    <property type="project" value="UniProtKB"/>
</dbReference>
<dbReference type="GO" id="GO:0019870">
    <property type="term" value="F:potassium channel inhibitor activity"/>
    <property type="evidence" value="ECO:0000314"/>
    <property type="project" value="MGI"/>
</dbReference>
<dbReference type="GO" id="GO:0051721">
    <property type="term" value="F:protein phosphatase 2A binding"/>
    <property type="evidence" value="ECO:0000250"/>
    <property type="project" value="UniProtKB"/>
</dbReference>
<dbReference type="GO" id="GO:0004864">
    <property type="term" value="F:protein phosphatase inhibitor activity"/>
    <property type="evidence" value="ECO:0000318"/>
    <property type="project" value="GO_Central"/>
</dbReference>
<dbReference type="GO" id="GO:0019888">
    <property type="term" value="F:protein phosphatase regulator activity"/>
    <property type="evidence" value="ECO:0000250"/>
    <property type="project" value="UniProtKB"/>
</dbReference>
<dbReference type="GO" id="GO:0005102">
    <property type="term" value="F:signaling receptor binding"/>
    <property type="evidence" value="ECO:0000314"/>
    <property type="project" value="MGI"/>
</dbReference>
<dbReference type="GO" id="GO:0051301">
    <property type="term" value="P:cell division"/>
    <property type="evidence" value="ECO:0007669"/>
    <property type="project" value="UniProtKB-KW"/>
</dbReference>
<dbReference type="GO" id="GO:0000086">
    <property type="term" value="P:G2/M transition of mitotic cell cycle"/>
    <property type="evidence" value="ECO:0000250"/>
    <property type="project" value="UniProtKB"/>
</dbReference>
<dbReference type="GO" id="GO:0000278">
    <property type="term" value="P:mitotic cell cycle"/>
    <property type="evidence" value="ECO:0000250"/>
    <property type="project" value="UniProtKB"/>
</dbReference>
<dbReference type="GO" id="GO:0050796">
    <property type="term" value="P:regulation of insulin secretion"/>
    <property type="evidence" value="ECO:0000314"/>
    <property type="project" value="MGI"/>
</dbReference>
<dbReference type="GO" id="GO:0007584">
    <property type="term" value="P:response to nutrient"/>
    <property type="evidence" value="ECO:0000304"/>
    <property type="project" value="ProtInc"/>
</dbReference>
<dbReference type="InterPro" id="IPR006760">
    <property type="entry name" value="Endosulphine"/>
</dbReference>
<dbReference type="PANTHER" id="PTHR10358:SF21">
    <property type="entry name" value="ALPHA-ENDOSULFINE"/>
    <property type="match status" value="1"/>
</dbReference>
<dbReference type="PANTHER" id="PTHR10358">
    <property type="entry name" value="ENDOSULFINE"/>
    <property type="match status" value="1"/>
</dbReference>
<dbReference type="Pfam" id="PF04667">
    <property type="entry name" value="Endosulfine"/>
    <property type="match status" value="1"/>
</dbReference>